<keyword id="KW-0030">Aminoacyl-tRNA synthetase</keyword>
<keyword id="KW-0067">ATP-binding</keyword>
<keyword id="KW-0963">Cytoplasm</keyword>
<keyword id="KW-0436">Ligase</keyword>
<keyword id="KW-0479">Metal-binding</keyword>
<keyword id="KW-0547">Nucleotide-binding</keyword>
<keyword id="KW-0648">Protein biosynthesis</keyword>
<keyword id="KW-0862">Zinc</keyword>
<protein>
    <recommendedName>
        <fullName evidence="1">Isoleucine--tRNA ligase</fullName>
        <ecNumber evidence="1">6.1.1.5</ecNumber>
    </recommendedName>
    <alternativeName>
        <fullName evidence="1">Isoleucyl-tRNA synthetase</fullName>
        <shortName evidence="1">IleRS</shortName>
    </alternativeName>
</protein>
<feature type="chain" id="PRO_1000189207" description="Isoleucine--tRNA ligase">
    <location>
        <begin position="1"/>
        <end position="930"/>
    </location>
</feature>
<feature type="short sequence motif" description="'HIGH' region">
    <location>
        <begin position="57"/>
        <end position="67"/>
    </location>
</feature>
<feature type="short sequence motif" description="'KMSKS' region">
    <location>
        <begin position="595"/>
        <end position="599"/>
    </location>
</feature>
<feature type="binding site" evidence="1">
    <location>
        <position position="554"/>
    </location>
    <ligand>
        <name>L-isoleucyl-5'-AMP</name>
        <dbReference type="ChEBI" id="CHEBI:178002"/>
    </ligand>
</feature>
<feature type="binding site" evidence="1">
    <location>
        <position position="598"/>
    </location>
    <ligand>
        <name>ATP</name>
        <dbReference type="ChEBI" id="CHEBI:30616"/>
    </ligand>
</feature>
<feature type="binding site" evidence="1">
    <location>
        <position position="888"/>
    </location>
    <ligand>
        <name>Zn(2+)</name>
        <dbReference type="ChEBI" id="CHEBI:29105"/>
    </ligand>
</feature>
<feature type="binding site" evidence="1">
    <location>
        <position position="891"/>
    </location>
    <ligand>
        <name>Zn(2+)</name>
        <dbReference type="ChEBI" id="CHEBI:29105"/>
    </ligand>
</feature>
<feature type="binding site" evidence="1">
    <location>
        <position position="908"/>
    </location>
    <ligand>
        <name>Zn(2+)</name>
        <dbReference type="ChEBI" id="CHEBI:29105"/>
    </ligand>
</feature>
<feature type="binding site" evidence="1">
    <location>
        <position position="911"/>
    </location>
    <ligand>
        <name>Zn(2+)</name>
        <dbReference type="ChEBI" id="CHEBI:29105"/>
    </ligand>
</feature>
<dbReference type="EC" id="6.1.1.5" evidence="1"/>
<dbReference type="EMBL" id="CP000921">
    <property type="protein sequence ID" value="ACO23157.1"/>
    <property type="molecule type" value="Genomic_DNA"/>
</dbReference>
<dbReference type="RefSeq" id="WP_000768077.1">
    <property type="nucleotide sequence ID" value="NC_012469.1"/>
</dbReference>
<dbReference type="SMR" id="C1CSS4"/>
<dbReference type="KEGG" id="snt:SPT_1598"/>
<dbReference type="HOGENOM" id="CLU_001493_7_1_9"/>
<dbReference type="GO" id="GO:0005829">
    <property type="term" value="C:cytosol"/>
    <property type="evidence" value="ECO:0007669"/>
    <property type="project" value="TreeGrafter"/>
</dbReference>
<dbReference type="GO" id="GO:0002161">
    <property type="term" value="F:aminoacyl-tRNA deacylase activity"/>
    <property type="evidence" value="ECO:0007669"/>
    <property type="project" value="InterPro"/>
</dbReference>
<dbReference type="GO" id="GO:0005524">
    <property type="term" value="F:ATP binding"/>
    <property type="evidence" value="ECO:0007669"/>
    <property type="project" value="UniProtKB-UniRule"/>
</dbReference>
<dbReference type="GO" id="GO:0004822">
    <property type="term" value="F:isoleucine-tRNA ligase activity"/>
    <property type="evidence" value="ECO:0007669"/>
    <property type="project" value="UniProtKB-UniRule"/>
</dbReference>
<dbReference type="GO" id="GO:0000049">
    <property type="term" value="F:tRNA binding"/>
    <property type="evidence" value="ECO:0007669"/>
    <property type="project" value="InterPro"/>
</dbReference>
<dbReference type="GO" id="GO:0008270">
    <property type="term" value="F:zinc ion binding"/>
    <property type="evidence" value="ECO:0007669"/>
    <property type="project" value="UniProtKB-UniRule"/>
</dbReference>
<dbReference type="GO" id="GO:0006428">
    <property type="term" value="P:isoleucyl-tRNA aminoacylation"/>
    <property type="evidence" value="ECO:0007669"/>
    <property type="project" value="UniProtKB-UniRule"/>
</dbReference>
<dbReference type="CDD" id="cd07960">
    <property type="entry name" value="Anticodon_Ia_Ile_BEm"/>
    <property type="match status" value="1"/>
</dbReference>
<dbReference type="CDD" id="cd00818">
    <property type="entry name" value="IleRS_core"/>
    <property type="match status" value="1"/>
</dbReference>
<dbReference type="FunFam" id="1.10.10.830:FF:000001">
    <property type="entry name" value="Isoleucine--tRNA ligase"/>
    <property type="match status" value="1"/>
</dbReference>
<dbReference type="FunFam" id="1.10.730.20:FF:000001">
    <property type="entry name" value="Isoleucine--tRNA ligase"/>
    <property type="match status" value="1"/>
</dbReference>
<dbReference type="FunFam" id="3.40.50.620:FF:000092">
    <property type="entry name" value="Isoleucine--tRNA ligase"/>
    <property type="match status" value="1"/>
</dbReference>
<dbReference type="FunFam" id="3.90.740.10:FF:000006">
    <property type="entry name" value="Isoleucine--tRNA ligase"/>
    <property type="match status" value="1"/>
</dbReference>
<dbReference type="Gene3D" id="1.10.730.20">
    <property type="match status" value="1"/>
</dbReference>
<dbReference type="Gene3D" id="3.40.50.620">
    <property type="entry name" value="HUPs"/>
    <property type="match status" value="2"/>
</dbReference>
<dbReference type="Gene3D" id="1.10.10.830">
    <property type="entry name" value="Ile-tRNA synthetase CP2 domain-like"/>
    <property type="match status" value="1"/>
</dbReference>
<dbReference type="Gene3D" id="3.90.740.10">
    <property type="entry name" value="Valyl/Leucyl/Isoleucyl-tRNA synthetase, editing domain"/>
    <property type="match status" value="1"/>
</dbReference>
<dbReference type="HAMAP" id="MF_02002">
    <property type="entry name" value="Ile_tRNA_synth_type1"/>
    <property type="match status" value="1"/>
</dbReference>
<dbReference type="InterPro" id="IPR001412">
    <property type="entry name" value="aa-tRNA-synth_I_CS"/>
</dbReference>
<dbReference type="InterPro" id="IPR002300">
    <property type="entry name" value="aa-tRNA-synth_Ia"/>
</dbReference>
<dbReference type="InterPro" id="IPR033708">
    <property type="entry name" value="Anticodon_Ile_BEm"/>
</dbReference>
<dbReference type="InterPro" id="IPR002301">
    <property type="entry name" value="Ile-tRNA-ligase"/>
</dbReference>
<dbReference type="InterPro" id="IPR023585">
    <property type="entry name" value="Ile-tRNA-ligase_type1"/>
</dbReference>
<dbReference type="InterPro" id="IPR050081">
    <property type="entry name" value="Ile-tRNA_ligase"/>
</dbReference>
<dbReference type="InterPro" id="IPR013155">
    <property type="entry name" value="M/V/L/I-tRNA-synth_anticd-bd"/>
</dbReference>
<dbReference type="InterPro" id="IPR014729">
    <property type="entry name" value="Rossmann-like_a/b/a_fold"/>
</dbReference>
<dbReference type="InterPro" id="IPR009080">
    <property type="entry name" value="tRNAsynth_Ia_anticodon-bd"/>
</dbReference>
<dbReference type="InterPro" id="IPR009008">
    <property type="entry name" value="Val/Leu/Ile-tRNA-synth_edit"/>
</dbReference>
<dbReference type="InterPro" id="IPR010663">
    <property type="entry name" value="Znf_FPG/IleRS"/>
</dbReference>
<dbReference type="NCBIfam" id="TIGR00392">
    <property type="entry name" value="ileS"/>
    <property type="match status" value="1"/>
</dbReference>
<dbReference type="PANTHER" id="PTHR42765:SF1">
    <property type="entry name" value="ISOLEUCINE--TRNA LIGASE, MITOCHONDRIAL"/>
    <property type="match status" value="1"/>
</dbReference>
<dbReference type="PANTHER" id="PTHR42765">
    <property type="entry name" value="SOLEUCYL-TRNA SYNTHETASE"/>
    <property type="match status" value="1"/>
</dbReference>
<dbReference type="Pfam" id="PF08264">
    <property type="entry name" value="Anticodon_1"/>
    <property type="match status" value="1"/>
</dbReference>
<dbReference type="Pfam" id="PF00133">
    <property type="entry name" value="tRNA-synt_1"/>
    <property type="match status" value="1"/>
</dbReference>
<dbReference type="Pfam" id="PF06827">
    <property type="entry name" value="zf-FPG_IleRS"/>
    <property type="match status" value="1"/>
</dbReference>
<dbReference type="PRINTS" id="PR00984">
    <property type="entry name" value="TRNASYNTHILE"/>
</dbReference>
<dbReference type="SUPFAM" id="SSF47323">
    <property type="entry name" value="Anticodon-binding domain of a subclass of class I aminoacyl-tRNA synthetases"/>
    <property type="match status" value="1"/>
</dbReference>
<dbReference type="SUPFAM" id="SSF52374">
    <property type="entry name" value="Nucleotidylyl transferase"/>
    <property type="match status" value="1"/>
</dbReference>
<dbReference type="SUPFAM" id="SSF50677">
    <property type="entry name" value="ValRS/IleRS/LeuRS editing domain"/>
    <property type="match status" value="1"/>
</dbReference>
<dbReference type="PROSITE" id="PS00178">
    <property type="entry name" value="AA_TRNA_LIGASE_I"/>
    <property type="match status" value="1"/>
</dbReference>
<name>SYI_STRZT</name>
<gene>
    <name evidence="1" type="primary">ileS</name>
    <name type="ordered locus">SPT_1598</name>
</gene>
<accession>C1CSS4</accession>
<proteinExistence type="inferred from homology"/>
<sequence length="930" mass="105367">MKLKDTLNLGKTEFPMRAGLPTKEPVWQKEWEDAKLYQRRQELNQGKPHFTLHDGPPYANGNIHVGHAMNKISKDIIVRSKSMSGFYAPFIPGWDTHGLPIEQVLSKQGVKRKEMDLVEYLKLCREYALSQVDKQREDFKRLGVSGDWENPYVTLTPDYEAAQIRVFGEMANKGYIYRGAKPVYWSWSSESALAEAEIEYHDLVSTSLYYANKVKDGKGVLDTDTYIVVWTTTPFTITASRGLTVGADIDYVLVQPAGEARKFVVAAELLTSLSEKFGWADVQVLETYRGQELNHIVTEHPWDTAVEELVILGDHVTTDSGTGIVHTAPGFGEDDYNVGIANNLEVAVTVDERGIMMKNAGPEFEGQFYEKVVPTVIEKLGNLLLAQEEISHSYPFDWRTKKPIIWRAVPQWFASVSKFRQEILDEIEKVKFHSEWGKVRLYNMIRDRGDWVISRQRAWGVPLPIFYAEDGTAIMVAETIEHVAQLFEEHGSSIWWERDAKDLLPEGFTHPGSPNGEFKKETDIMDVWFDSGSSWNGVVVNRPELTYPADLYLEGSDQYRGWFNSSLITSVANHGVAPYKQILSQGFALDGKGEKMSKSLGNTIAPSDVEKQFGAEILRLWVTSVDSSNDVRISMDILSQVSETYRKIRNTLRFLIANTSDFNPAQDTVAYDELRSVDKYMTIRFNQLVKTIRDAYADFEFLTIYKALVNFINVDLSAFYLDFAKDVVYIEGAKSLERRQMQTVFYDILVKITKLLTPILPHTAEEIWSYLEFEAEDFVQLSELPEAQTSANQEEILDTWAAFMDFRGQAQKALEEARNAKVIGKSLEAHLTVYPNEVVKTLLEAVNSNVAQLLIVSELTIAEEPTPEAALSFEDVAFTVERAAGEVCDRCRRIDPTTAERSYQAVICDHCASIVEENFADAVAEGFEEK</sequence>
<organism>
    <name type="scientific">Streptococcus pneumoniae (strain Taiwan19F-14)</name>
    <dbReference type="NCBI Taxonomy" id="487213"/>
    <lineage>
        <taxon>Bacteria</taxon>
        <taxon>Bacillati</taxon>
        <taxon>Bacillota</taxon>
        <taxon>Bacilli</taxon>
        <taxon>Lactobacillales</taxon>
        <taxon>Streptococcaceae</taxon>
        <taxon>Streptococcus</taxon>
    </lineage>
</organism>
<reference key="1">
    <citation type="journal article" date="2010" name="Genome Biol.">
        <title>Structure and dynamics of the pan-genome of Streptococcus pneumoniae and closely related species.</title>
        <authorList>
            <person name="Donati C."/>
            <person name="Hiller N.L."/>
            <person name="Tettelin H."/>
            <person name="Muzzi A."/>
            <person name="Croucher N.J."/>
            <person name="Angiuoli S.V."/>
            <person name="Oggioni M."/>
            <person name="Dunning Hotopp J.C."/>
            <person name="Hu F.Z."/>
            <person name="Riley D.R."/>
            <person name="Covacci A."/>
            <person name="Mitchell T.J."/>
            <person name="Bentley S.D."/>
            <person name="Kilian M."/>
            <person name="Ehrlich G.D."/>
            <person name="Rappuoli R."/>
            <person name="Moxon E.R."/>
            <person name="Masignani V."/>
        </authorList>
    </citation>
    <scope>NUCLEOTIDE SEQUENCE [LARGE SCALE GENOMIC DNA]</scope>
    <source>
        <strain>Taiwan19F-14</strain>
    </source>
</reference>
<comment type="function">
    <text evidence="1">Catalyzes the attachment of isoleucine to tRNA(Ile). As IleRS can inadvertently accommodate and process structurally similar amino acids such as valine, to avoid such errors it has two additional distinct tRNA(Ile)-dependent editing activities. One activity is designated as 'pretransfer' editing and involves the hydrolysis of activated Val-AMP. The other activity is designated 'posttransfer' editing and involves deacylation of mischarged Val-tRNA(Ile).</text>
</comment>
<comment type="catalytic activity">
    <reaction evidence="1">
        <text>tRNA(Ile) + L-isoleucine + ATP = L-isoleucyl-tRNA(Ile) + AMP + diphosphate</text>
        <dbReference type="Rhea" id="RHEA:11060"/>
        <dbReference type="Rhea" id="RHEA-COMP:9666"/>
        <dbReference type="Rhea" id="RHEA-COMP:9695"/>
        <dbReference type="ChEBI" id="CHEBI:30616"/>
        <dbReference type="ChEBI" id="CHEBI:33019"/>
        <dbReference type="ChEBI" id="CHEBI:58045"/>
        <dbReference type="ChEBI" id="CHEBI:78442"/>
        <dbReference type="ChEBI" id="CHEBI:78528"/>
        <dbReference type="ChEBI" id="CHEBI:456215"/>
        <dbReference type="EC" id="6.1.1.5"/>
    </reaction>
</comment>
<comment type="cofactor">
    <cofactor evidence="1">
        <name>Zn(2+)</name>
        <dbReference type="ChEBI" id="CHEBI:29105"/>
    </cofactor>
    <text evidence="1">Binds 1 zinc ion per subunit.</text>
</comment>
<comment type="subunit">
    <text evidence="1">Monomer.</text>
</comment>
<comment type="subcellular location">
    <subcellularLocation>
        <location evidence="1">Cytoplasm</location>
    </subcellularLocation>
</comment>
<comment type="domain">
    <text evidence="1">IleRS has two distinct active sites: one for aminoacylation and one for editing. The misactivated valine is translocated from the active site to the editing site, which sterically excludes the correctly activated isoleucine. The single editing site contains two valyl binding pockets, one specific for each substrate (Val-AMP or Val-tRNA(Ile)).</text>
</comment>
<comment type="similarity">
    <text evidence="1">Belongs to the class-I aminoacyl-tRNA synthetase family. IleS type 1 subfamily.</text>
</comment>
<evidence type="ECO:0000255" key="1">
    <source>
        <dbReference type="HAMAP-Rule" id="MF_02002"/>
    </source>
</evidence>